<feature type="chain" id="PRO_1000090488" description="UDP-N-acetylglucosamine--N-acetylmuramyl-(pentapeptide) pyrophosphoryl-undecaprenol N-acetylglucosamine transferase">
    <location>
        <begin position="1"/>
        <end position="427"/>
    </location>
</feature>
<feature type="region of interest" description="Disordered" evidence="2">
    <location>
        <begin position="408"/>
        <end position="427"/>
    </location>
</feature>
<feature type="binding site" evidence="1">
    <location>
        <begin position="29"/>
        <end position="31"/>
    </location>
    <ligand>
        <name>UDP-N-acetyl-alpha-D-glucosamine</name>
        <dbReference type="ChEBI" id="CHEBI:57705"/>
    </ligand>
</feature>
<feature type="binding site" evidence="1">
    <location>
        <position position="141"/>
    </location>
    <ligand>
        <name>UDP-N-acetyl-alpha-D-glucosamine</name>
        <dbReference type="ChEBI" id="CHEBI:57705"/>
    </ligand>
</feature>
<feature type="binding site" evidence="1">
    <location>
        <position position="177"/>
    </location>
    <ligand>
        <name>UDP-N-acetyl-alpha-D-glucosamine</name>
        <dbReference type="ChEBI" id="CHEBI:57705"/>
    </ligand>
</feature>
<feature type="binding site" evidence="1">
    <location>
        <position position="205"/>
    </location>
    <ligand>
        <name>UDP-N-acetyl-alpha-D-glucosamine</name>
        <dbReference type="ChEBI" id="CHEBI:57705"/>
    </ligand>
</feature>
<feature type="binding site" evidence="1">
    <location>
        <position position="258"/>
    </location>
    <ligand>
        <name>UDP-N-acetyl-alpha-D-glucosamine</name>
        <dbReference type="ChEBI" id="CHEBI:57705"/>
    </ligand>
</feature>
<feature type="binding site" evidence="1">
    <location>
        <position position="303"/>
    </location>
    <ligand>
        <name>UDP-N-acetyl-alpha-D-glucosamine</name>
        <dbReference type="ChEBI" id="CHEBI:57705"/>
    </ligand>
</feature>
<proteinExistence type="inferred from homology"/>
<sequence>MSVEHATPVQQPAHAAASVRPVMILAGGTGGHIFPGLAVAKVLRARGVPVTWLGADGAMETRLVPQHAIQIDTLAISGLRGKGIVKLLGAPVRVMRAVRAAGFVLRKRQPRAVISFGGFAAGPGGLAARLLGVPLLVHEQNRAPGMTNKVLSRFARRVLTGFPGSFAGEEAVGNPVREEIAALPAPATRLIGRGGPVRLLVLGGSQGARALNNAVPAALAALGHPAVDVRHQCGEKLRAEAEAAYAQAAVNASVEPFIADMAAAYAWADLVVCRAGASTLAEVCAAGVGSVLVPFAAAVDDHQTRNAEYLVSAEAAVLLKQDGTLAVRLQQVLQTLLADPARRLAMAQAARTLAKPDAAERIADIILQEAGNGKSGMGNGQSTEQLQEHTVIHQNKRTDQALDAASASLHPIPDSRFPIRTSAGGAQ</sequence>
<organism>
    <name type="scientific">Xanthomonas campestris pv. campestris (strain B100)</name>
    <dbReference type="NCBI Taxonomy" id="509169"/>
    <lineage>
        <taxon>Bacteria</taxon>
        <taxon>Pseudomonadati</taxon>
        <taxon>Pseudomonadota</taxon>
        <taxon>Gammaproteobacteria</taxon>
        <taxon>Lysobacterales</taxon>
        <taxon>Lysobacteraceae</taxon>
        <taxon>Xanthomonas</taxon>
    </lineage>
</organism>
<comment type="function">
    <text evidence="1">Cell wall formation. Catalyzes the transfer of a GlcNAc subunit on undecaprenyl-pyrophosphoryl-MurNAc-pentapeptide (lipid intermediate I) to form undecaprenyl-pyrophosphoryl-MurNAc-(pentapeptide)GlcNAc (lipid intermediate II).</text>
</comment>
<comment type="catalytic activity">
    <reaction evidence="1">
        <text>di-trans,octa-cis-undecaprenyl diphospho-N-acetyl-alpha-D-muramoyl-L-alanyl-D-glutamyl-meso-2,6-diaminopimeloyl-D-alanyl-D-alanine + UDP-N-acetyl-alpha-D-glucosamine = di-trans,octa-cis-undecaprenyl diphospho-[N-acetyl-alpha-D-glucosaminyl-(1-&gt;4)]-N-acetyl-alpha-D-muramoyl-L-alanyl-D-glutamyl-meso-2,6-diaminopimeloyl-D-alanyl-D-alanine + UDP + H(+)</text>
        <dbReference type="Rhea" id="RHEA:31227"/>
        <dbReference type="ChEBI" id="CHEBI:15378"/>
        <dbReference type="ChEBI" id="CHEBI:57705"/>
        <dbReference type="ChEBI" id="CHEBI:58223"/>
        <dbReference type="ChEBI" id="CHEBI:61387"/>
        <dbReference type="ChEBI" id="CHEBI:61388"/>
        <dbReference type="EC" id="2.4.1.227"/>
    </reaction>
</comment>
<comment type="pathway">
    <text evidence="1">Cell wall biogenesis; peptidoglycan biosynthesis.</text>
</comment>
<comment type="subcellular location">
    <subcellularLocation>
        <location evidence="1">Cell inner membrane</location>
        <topology evidence="1">Peripheral membrane protein</topology>
        <orientation evidence="1">Cytoplasmic side</orientation>
    </subcellularLocation>
</comment>
<comment type="similarity">
    <text evidence="1">Belongs to the glycosyltransferase 28 family. MurG subfamily.</text>
</comment>
<reference key="1">
    <citation type="journal article" date="2008" name="J. Biotechnol.">
        <title>The genome of Xanthomonas campestris pv. campestris B100 and its use for the reconstruction of metabolic pathways involved in xanthan biosynthesis.</title>
        <authorList>
            <person name="Vorhoelter F.-J."/>
            <person name="Schneiker S."/>
            <person name="Goesmann A."/>
            <person name="Krause L."/>
            <person name="Bekel T."/>
            <person name="Kaiser O."/>
            <person name="Linke B."/>
            <person name="Patschkowski T."/>
            <person name="Rueckert C."/>
            <person name="Schmid J."/>
            <person name="Sidhu V.K."/>
            <person name="Sieber V."/>
            <person name="Tauch A."/>
            <person name="Watt S.A."/>
            <person name="Weisshaar B."/>
            <person name="Becker A."/>
            <person name="Niehaus K."/>
            <person name="Puehler A."/>
        </authorList>
    </citation>
    <scope>NUCLEOTIDE SEQUENCE [LARGE SCALE GENOMIC DNA]</scope>
    <source>
        <strain>B100</strain>
    </source>
</reference>
<name>MURG_XANCB</name>
<dbReference type="EC" id="2.4.1.227" evidence="1"/>
<dbReference type="EMBL" id="AM920689">
    <property type="protein sequence ID" value="CAP52996.1"/>
    <property type="molecule type" value="Genomic_DNA"/>
</dbReference>
<dbReference type="SMR" id="B0RVA5"/>
<dbReference type="KEGG" id="xca:xcc-b100_3631"/>
<dbReference type="HOGENOM" id="CLU_037404_2_0_6"/>
<dbReference type="UniPathway" id="UPA00219"/>
<dbReference type="Proteomes" id="UP000001188">
    <property type="component" value="Chromosome"/>
</dbReference>
<dbReference type="GO" id="GO:0005886">
    <property type="term" value="C:plasma membrane"/>
    <property type="evidence" value="ECO:0007669"/>
    <property type="project" value="UniProtKB-SubCell"/>
</dbReference>
<dbReference type="GO" id="GO:0051991">
    <property type="term" value="F:UDP-N-acetyl-D-glucosamine:N-acetylmuramoyl-L-alanyl-D-glutamyl-meso-2,6-diaminopimelyl-D-alanyl-D-alanine-diphosphoundecaprenol 4-beta-N-acetylglucosaminlytransferase activity"/>
    <property type="evidence" value="ECO:0007669"/>
    <property type="project" value="RHEA"/>
</dbReference>
<dbReference type="GO" id="GO:0050511">
    <property type="term" value="F:undecaprenyldiphospho-muramoylpentapeptide beta-N-acetylglucosaminyltransferase activity"/>
    <property type="evidence" value="ECO:0007669"/>
    <property type="project" value="UniProtKB-UniRule"/>
</dbReference>
<dbReference type="GO" id="GO:0005975">
    <property type="term" value="P:carbohydrate metabolic process"/>
    <property type="evidence" value="ECO:0007669"/>
    <property type="project" value="InterPro"/>
</dbReference>
<dbReference type="GO" id="GO:0051301">
    <property type="term" value="P:cell division"/>
    <property type="evidence" value="ECO:0007669"/>
    <property type="project" value="UniProtKB-KW"/>
</dbReference>
<dbReference type="GO" id="GO:0071555">
    <property type="term" value="P:cell wall organization"/>
    <property type="evidence" value="ECO:0007669"/>
    <property type="project" value="UniProtKB-KW"/>
</dbReference>
<dbReference type="GO" id="GO:0030259">
    <property type="term" value="P:lipid glycosylation"/>
    <property type="evidence" value="ECO:0007669"/>
    <property type="project" value="UniProtKB-UniRule"/>
</dbReference>
<dbReference type="GO" id="GO:0009252">
    <property type="term" value="P:peptidoglycan biosynthetic process"/>
    <property type="evidence" value="ECO:0007669"/>
    <property type="project" value="UniProtKB-UniRule"/>
</dbReference>
<dbReference type="GO" id="GO:0008360">
    <property type="term" value="P:regulation of cell shape"/>
    <property type="evidence" value="ECO:0007669"/>
    <property type="project" value="UniProtKB-KW"/>
</dbReference>
<dbReference type="CDD" id="cd03785">
    <property type="entry name" value="GT28_MurG"/>
    <property type="match status" value="1"/>
</dbReference>
<dbReference type="Gene3D" id="3.40.50.2000">
    <property type="entry name" value="Glycogen Phosphorylase B"/>
    <property type="match status" value="2"/>
</dbReference>
<dbReference type="HAMAP" id="MF_00033">
    <property type="entry name" value="MurG"/>
    <property type="match status" value="1"/>
</dbReference>
<dbReference type="InterPro" id="IPR006009">
    <property type="entry name" value="GlcNAc_MurG"/>
</dbReference>
<dbReference type="InterPro" id="IPR007235">
    <property type="entry name" value="Glyco_trans_28_C"/>
</dbReference>
<dbReference type="InterPro" id="IPR004276">
    <property type="entry name" value="GlycoTrans_28_N"/>
</dbReference>
<dbReference type="NCBIfam" id="TIGR01133">
    <property type="entry name" value="murG"/>
    <property type="match status" value="1"/>
</dbReference>
<dbReference type="PANTHER" id="PTHR21015:SF22">
    <property type="entry name" value="GLYCOSYLTRANSFERASE"/>
    <property type="match status" value="1"/>
</dbReference>
<dbReference type="PANTHER" id="PTHR21015">
    <property type="entry name" value="UDP-N-ACETYLGLUCOSAMINE--N-ACETYLMURAMYL-(PENTAPEPTIDE) PYROPHOSPHORYL-UNDECAPRENOL N-ACETYLGLUCOSAMINE TRANSFERASE 1"/>
    <property type="match status" value="1"/>
</dbReference>
<dbReference type="Pfam" id="PF04101">
    <property type="entry name" value="Glyco_tran_28_C"/>
    <property type="match status" value="1"/>
</dbReference>
<dbReference type="Pfam" id="PF03033">
    <property type="entry name" value="Glyco_transf_28"/>
    <property type="match status" value="1"/>
</dbReference>
<dbReference type="SUPFAM" id="SSF53756">
    <property type="entry name" value="UDP-Glycosyltransferase/glycogen phosphorylase"/>
    <property type="match status" value="1"/>
</dbReference>
<evidence type="ECO:0000255" key="1">
    <source>
        <dbReference type="HAMAP-Rule" id="MF_00033"/>
    </source>
</evidence>
<evidence type="ECO:0000256" key="2">
    <source>
        <dbReference type="SAM" id="MobiDB-lite"/>
    </source>
</evidence>
<protein>
    <recommendedName>
        <fullName evidence="1">UDP-N-acetylglucosamine--N-acetylmuramyl-(pentapeptide) pyrophosphoryl-undecaprenol N-acetylglucosamine transferase</fullName>
        <ecNumber evidence="1">2.4.1.227</ecNumber>
    </recommendedName>
    <alternativeName>
        <fullName evidence="1">Undecaprenyl-PP-MurNAc-pentapeptide-UDPGlcNAc GlcNAc transferase</fullName>
    </alternativeName>
</protein>
<gene>
    <name evidence="1" type="primary">murG</name>
    <name type="ordered locus">xcc-b100_3631</name>
</gene>
<accession>B0RVA5</accession>
<keyword id="KW-0131">Cell cycle</keyword>
<keyword id="KW-0132">Cell division</keyword>
<keyword id="KW-0997">Cell inner membrane</keyword>
<keyword id="KW-1003">Cell membrane</keyword>
<keyword id="KW-0133">Cell shape</keyword>
<keyword id="KW-0961">Cell wall biogenesis/degradation</keyword>
<keyword id="KW-0328">Glycosyltransferase</keyword>
<keyword id="KW-0472">Membrane</keyword>
<keyword id="KW-0573">Peptidoglycan synthesis</keyword>
<keyword id="KW-0808">Transferase</keyword>